<name>PR38A_PONAB</name>
<gene>
    <name type="primary">PRPF38A</name>
</gene>
<reference key="1">
    <citation type="submission" date="2004-11" db="EMBL/GenBank/DDBJ databases">
        <authorList>
            <consortium name="The German cDNA consortium"/>
        </authorList>
    </citation>
    <scope>NUCLEOTIDE SEQUENCE [LARGE SCALE MRNA]</scope>
    <source>
        <tissue>Kidney</tissue>
    </source>
</reference>
<accession>Q5RDD2</accession>
<keyword id="KW-0175">Coiled coil</keyword>
<keyword id="KW-0507">mRNA processing</keyword>
<keyword id="KW-0508">mRNA splicing</keyword>
<keyword id="KW-0539">Nucleus</keyword>
<keyword id="KW-0597">Phosphoprotein</keyword>
<keyword id="KW-1185">Reference proteome</keyword>
<keyword id="KW-0747">Spliceosome</keyword>
<dbReference type="EMBL" id="CR857982">
    <property type="protein sequence ID" value="CAH90225.1"/>
    <property type="molecule type" value="mRNA"/>
</dbReference>
<dbReference type="RefSeq" id="NP_001125092.1">
    <property type="nucleotide sequence ID" value="NM_001131620.1"/>
</dbReference>
<dbReference type="SMR" id="Q5RDD2"/>
<dbReference type="FunCoup" id="Q5RDD2">
    <property type="interactions" value="3321"/>
</dbReference>
<dbReference type="STRING" id="9601.ENSPPYP00000001567"/>
<dbReference type="Ensembl" id="ENSPPYT00000001616.3">
    <property type="protein sequence ID" value="ENSPPYP00000001567.3"/>
    <property type="gene ID" value="ENSPPYG00000001348.3"/>
</dbReference>
<dbReference type="GeneID" id="100171974"/>
<dbReference type="KEGG" id="pon:100171974"/>
<dbReference type="CTD" id="84950"/>
<dbReference type="eggNOG" id="KOG2889">
    <property type="taxonomic scope" value="Eukaryota"/>
</dbReference>
<dbReference type="GeneTree" id="ENSGT00730000111085"/>
<dbReference type="InParanoid" id="Q5RDD2"/>
<dbReference type="OMA" id="HTYWKEQ"/>
<dbReference type="OrthoDB" id="190958at2759"/>
<dbReference type="Proteomes" id="UP000001595">
    <property type="component" value="Chromosome 1"/>
</dbReference>
<dbReference type="GO" id="GO:0005654">
    <property type="term" value="C:nucleoplasm"/>
    <property type="evidence" value="ECO:0007669"/>
    <property type="project" value="Ensembl"/>
</dbReference>
<dbReference type="GO" id="GO:0005634">
    <property type="term" value="C:nucleus"/>
    <property type="evidence" value="ECO:0000250"/>
    <property type="project" value="UniProtKB"/>
</dbReference>
<dbReference type="GO" id="GO:0071005">
    <property type="term" value="C:U2-type precatalytic spliceosome"/>
    <property type="evidence" value="ECO:0000250"/>
    <property type="project" value="UniProtKB"/>
</dbReference>
<dbReference type="GO" id="GO:0000398">
    <property type="term" value="P:mRNA splicing, via spliceosome"/>
    <property type="evidence" value="ECO:0000250"/>
    <property type="project" value="UniProtKB"/>
</dbReference>
<dbReference type="InterPro" id="IPR005037">
    <property type="entry name" value="PRP38"/>
</dbReference>
<dbReference type="InterPro" id="IPR024767">
    <property type="entry name" value="PRP38_C"/>
</dbReference>
<dbReference type="PANTHER" id="PTHR23142">
    <property type="entry name" value="PRE-MRNA-SPLICING FACTOR 38A-RELATED"/>
    <property type="match status" value="1"/>
</dbReference>
<dbReference type="Pfam" id="PF03371">
    <property type="entry name" value="PRP38"/>
    <property type="match status" value="1"/>
</dbReference>
<dbReference type="Pfam" id="PF12871">
    <property type="entry name" value="PRP38_assoc"/>
    <property type="match status" value="1"/>
</dbReference>
<evidence type="ECO:0000250" key="1">
    <source>
        <dbReference type="UniProtKB" id="Q8NAV1"/>
    </source>
</evidence>
<evidence type="ECO:0000255" key="2"/>
<evidence type="ECO:0000256" key="3">
    <source>
        <dbReference type="SAM" id="MobiDB-lite"/>
    </source>
</evidence>
<evidence type="ECO:0000305" key="4"/>
<protein>
    <recommendedName>
        <fullName>Pre-mRNA-splicing factor 38A</fullName>
    </recommendedName>
</protein>
<feature type="chain" id="PRO_0000287275" description="Pre-mRNA-splicing factor 38A">
    <location>
        <begin position="1"/>
        <end position="312"/>
    </location>
</feature>
<feature type="region of interest" description="N-terminal protein interaction domain" evidence="1">
    <location>
        <begin position="1"/>
        <end position="179"/>
    </location>
</feature>
<feature type="region of interest" description="Disordered" evidence="3">
    <location>
        <begin position="181"/>
        <end position="312"/>
    </location>
</feature>
<feature type="coiled-coil region" evidence="2">
    <location>
        <begin position="170"/>
        <end position="204"/>
    </location>
</feature>
<feature type="compositionally biased region" description="Acidic residues" evidence="3">
    <location>
        <begin position="184"/>
        <end position="202"/>
    </location>
</feature>
<feature type="compositionally biased region" description="Basic and acidic residues" evidence="3">
    <location>
        <begin position="203"/>
        <end position="224"/>
    </location>
</feature>
<feature type="compositionally biased region" description="Basic residues" evidence="3">
    <location>
        <begin position="225"/>
        <end position="294"/>
    </location>
</feature>
<feature type="compositionally biased region" description="Basic residues" evidence="3">
    <location>
        <begin position="301"/>
        <end position="312"/>
    </location>
</feature>
<feature type="modified residue" description="Phosphoserine" evidence="1">
    <location>
        <position position="11"/>
    </location>
</feature>
<feature type="modified residue" description="Phosphoserine" evidence="1">
    <location>
        <position position="193"/>
    </location>
</feature>
<feature type="modified residue" description="Phosphoserine" evidence="1">
    <location>
        <position position="194"/>
    </location>
</feature>
<feature type="modified residue" description="Phosphoserine" evidence="1">
    <location>
        <position position="209"/>
    </location>
</feature>
<feature type="modified residue" description="Phosphoserine" evidence="1">
    <location>
        <position position="226"/>
    </location>
</feature>
<comment type="function">
    <text evidence="1">Involved in pre-mRNA splicing as a component of the spliceosome.</text>
</comment>
<comment type="subunit">
    <text evidence="1">Component of the spliceosome B complex. Interacts (via N-terminal interaction domain) with ZMAT2 and MFAP1.</text>
</comment>
<comment type="subcellular location">
    <subcellularLocation>
        <location evidence="1">Nucleus</location>
    </subcellularLocation>
</comment>
<comment type="similarity">
    <text evidence="4">Belongs to the PRP38 family.</text>
</comment>
<proteinExistence type="evidence at transcript level"/>
<organism>
    <name type="scientific">Pongo abelii</name>
    <name type="common">Sumatran orangutan</name>
    <name type="synonym">Pongo pygmaeus abelii</name>
    <dbReference type="NCBI Taxonomy" id="9601"/>
    <lineage>
        <taxon>Eukaryota</taxon>
        <taxon>Metazoa</taxon>
        <taxon>Chordata</taxon>
        <taxon>Craniata</taxon>
        <taxon>Vertebrata</taxon>
        <taxon>Euteleostomi</taxon>
        <taxon>Mammalia</taxon>
        <taxon>Eutheria</taxon>
        <taxon>Euarchontoglires</taxon>
        <taxon>Primates</taxon>
        <taxon>Haplorrhini</taxon>
        <taxon>Catarrhini</taxon>
        <taxon>Hominidae</taxon>
        <taxon>Pongo</taxon>
    </lineage>
</organism>
<sequence length="312" mass="37477">MANRTVKDAHSIHGTNPQYLVEKIIRTRIYESKYWKEECFGLTAELVVDKAMELRFVGGVYGGNIKPTPFLCLTLKMLQIQPEKDIIVEFIKNEDFKYVRMLGALYMRLTGTAIDCYKYLEPLYNDYRKIKSQNRNGEFELMHVDEFIDELLHSERVCDIILPRLQKRYVLEEAEQLEPRVSALEEDMDDVESSEEEEEEDEKLERVPSPDHRRRSYRDLDKPRRSPTLRYRRSRSRSPRRRSRSPKRRSPSPRRERHRSKSPRRHRSRSRDRRHRSRSKSPGHHRSHRHRSHSKSPERSKKSHKKSRRGNE</sequence>